<comment type="function">
    <text evidence="1">This protein binds specifically to 23S rRNA; its binding is stimulated by other ribosomal proteins, e.g. L4, L17, and L20. It is important during the early stages of 50S assembly. It makes multiple contacts with different domains of the 23S rRNA in the assembled 50S subunit and ribosome (By similarity).</text>
</comment>
<comment type="function">
    <text evidence="1">The globular domain of the protein is located near the polypeptide exit tunnel on the outside of the subunit, while an extended beta-hairpin is found that lines the wall of the exit tunnel in the center of the 70S ribosome.</text>
</comment>
<comment type="subunit">
    <text evidence="1">Part of the 50S ribosomal subunit.</text>
</comment>
<comment type="similarity">
    <text evidence="1">Belongs to the universal ribosomal protein uL22 family.</text>
</comment>
<comment type="sequence caution" evidence="2">
    <conflict type="erroneous initiation">
        <sequence resource="EMBL-CDS" id="CAL76873"/>
    </conflict>
</comment>
<feature type="chain" id="PRO_0000354448" description="Large ribosomal subunit protein uL22">
    <location>
        <begin position="1"/>
        <end position="126"/>
    </location>
</feature>
<accession>A4YSJ7</accession>
<reference key="1">
    <citation type="journal article" date="2007" name="Science">
        <title>Legumes symbioses: absence of nod genes in photosynthetic bradyrhizobia.</title>
        <authorList>
            <person name="Giraud E."/>
            <person name="Moulin L."/>
            <person name="Vallenet D."/>
            <person name="Barbe V."/>
            <person name="Cytryn E."/>
            <person name="Avarre J.-C."/>
            <person name="Jaubert M."/>
            <person name="Simon D."/>
            <person name="Cartieaux F."/>
            <person name="Prin Y."/>
            <person name="Bena G."/>
            <person name="Hannibal L."/>
            <person name="Fardoux J."/>
            <person name="Kojadinovic M."/>
            <person name="Vuillet L."/>
            <person name="Lajus A."/>
            <person name="Cruveiller S."/>
            <person name="Rouy Z."/>
            <person name="Mangenot S."/>
            <person name="Segurens B."/>
            <person name="Dossat C."/>
            <person name="Franck W.L."/>
            <person name="Chang W.-S."/>
            <person name="Saunders E."/>
            <person name="Bruce D."/>
            <person name="Richardson P."/>
            <person name="Normand P."/>
            <person name="Dreyfus B."/>
            <person name="Pignol D."/>
            <person name="Stacey G."/>
            <person name="Emerich D."/>
            <person name="Vermeglio A."/>
            <person name="Medigue C."/>
            <person name="Sadowsky M."/>
        </authorList>
    </citation>
    <scope>NUCLEOTIDE SEQUENCE [LARGE SCALE GENOMIC DNA]</scope>
    <source>
        <strain>ORS 278</strain>
    </source>
</reference>
<dbReference type="EMBL" id="CU234118">
    <property type="protein sequence ID" value="CAL76873.1"/>
    <property type="status" value="ALT_INIT"/>
    <property type="molecule type" value="Genomic_DNA"/>
</dbReference>
<dbReference type="RefSeq" id="WP_006611843.1">
    <property type="nucleotide sequence ID" value="NC_009445.1"/>
</dbReference>
<dbReference type="SMR" id="A4YSJ7"/>
<dbReference type="STRING" id="114615.BRADO3071"/>
<dbReference type="KEGG" id="bra:BRADO3071"/>
<dbReference type="eggNOG" id="COG0091">
    <property type="taxonomic scope" value="Bacteria"/>
</dbReference>
<dbReference type="HOGENOM" id="CLU_083987_3_0_5"/>
<dbReference type="OrthoDB" id="9805969at2"/>
<dbReference type="Proteomes" id="UP000001994">
    <property type="component" value="Chromosome"/>
</dbReference>
<dbReference type="GO" id="GO:0022625">
    <property type="term" value="C:cytosolic large ribosomal subunit"/>
    <property type="evidence" value="ECO:0007669"/>
    <property type="project" value="TreeGrafter"/>
</dbReference>
<dbReference type="GO" id="GO:0019843">
    <property type="term" value="F:rRNA binding"/>
    <property type="evidence" value="ECO:0007669"/>
    <property type="project" value="UniProtKB-UniRule"/>
</dbReference>
<dbReference type="GO" id="GO:0003735">
    <property type="term" value="F:structural constituent of ribosome"/>
    <property type="evidence" value="ECO:0007669"/>
    <property type="project" value="InterPro"/>
</dbReference>
<dbReference type="GO" id="GO:0006412">
    <property type="term" value="P:translation"/>
    <property type="evidence" value="ECO:0007669"/>
    <property type="project" value="UniProtKB-UniRule"/>
</dbReference>
<dbReference type="CDD" id="cd00336">
    <property type="entry name" value="Ribosomal_L22"/>
    <property type="match status" value="1"/>
</dbReference>
<dbReference type="Gene3D" id="3.90.470.10">
    <property type="entry name" value="Ribosomal protein L22/L17"/>
    <property type="match status" value="1"/>
</dbReference>
<dbReference type="HAMAP" id="MF_01331_B">
    <property type="entry name" value="Ribosomal_uL22_B"/>
    <property type="match status" value="1"/>
</dbReference>
<dbReference type="InterPro" id="IPR001063">
    <property type="entry name" value="Ribosomal_uL22"/>
</dbReference>
<dbReference type="InterPro" id="IPR005727">
    <property type="entry name" value="Ribosomal_uL22_bac/chlpt-type"/>
</dbReference>
<dbReference type="InterPro" id="IPR047867">
    <property type="entry name" value="Ribosomal_uL22_bac/org-type"/>
</dbReference>
<dbReference type="InterPro" id="IPR036394">
    <property type="entry name" value="Ribosomal_uL22_sf"/>
</dbReference>
<dbReference type="NCBIfam" id="TIGR01044">
    <property type="entry name" value="rplV_bact"/>
    <property type="match status" value="1"/>
</dbReference>
<dbReference type="PANTHER" id="PTHR13501">
    <property type="entry name" value="CHLOROPLAST 50S RIBOSOMAL PROTEIN L22-RELATED"/>
    <property type="match status" value="1"/>
</dbReference>
<dbReference type="PANTHER" id="PTHR13501:SF8">
    <property type="entry name" value="LARGE RIBOSOMAL SUBUNIT PROTEIN UL22M"/>
    <property type="match status" value="1"/>
</dbReference>
<dbReference type="Pfam" id="PF00237">
    <property type="entry name" value="Ribosomal_L22"/>
    <property type="match status" value="1"/>
</dbReference>
<dbReference type="SUPFAM" id="SSF54843">
    <property type="entry name" value="Ribosomal protein L22"/>
    <property type="match status" value="1"/>
</dbReference>
<keyword id="KW-1185">Reference proteome</keyword>
<keyword id="KW-0687">Ribonucleoprotein</keyword>
<keyword id="KW-0689">Ribosomal protein</keyword>
<keyword id="KW-0694">RNA-binding</keyword>
<keyword id="KW-0699">rRNA-binding</keyword>
<gene>
    <name evidence="1" type="primary">rplV</name>
    <name type="ordered locus">BRADO3071</name>
</gene>
<proteinExistence type="inferred from homology"/>
<sequence>MSKPKRERSLPDNEAKAVARMLRVSPQKLNLVAQMIRGRKASAALADLQFSRKRIAVDVKKCLESAIANAENNHELEVDDLVVSQAFVGKGIVMKRFSPRGRGRSGRVFKPFSQLTIIVRQVEASA</sequence>
<organism>
    <name type="scientific">Bradyrhizobium sp. (strain ORS 278)</name>
    <dbReference type="NCBI Taxonomy" id="114615"/>
    <lineage>
        <taxon>Bacteria</taxon>
        <taxon>Pseudomonadati</taxon>
        <taxon>Pseudomonadota</taxon>
        <taxon>Alphaproteobacteria</taxon>
        <taxon>Hyphomicrobiales</taxon>
        <taxon>Nitrobacteraceae</taxon>
        <taxon>Bradyrhizobium</taxon>
    </lineage>
</organism>
<protein>
    <recommendedName>
        <fullName evidence="1">Large ribosomal subunit protein uL22</fullName>
    </recommendedName>
    <alternativeName>
        <fullName evidence="2">50S ribosomal protein L22</fullName>
    </alternativeName>
</protein>
<evidence type="ECO:0000255" key="1">
    <source>
        <dbReference type="HAMAP-Rule" id="MF_01331"/>
    </source>
</evidence>
<evidence type="ECO:0000305" key="2"/>
<name>RL22_BRASO</name>